<dbReference type="EC" id="5.3.3.2" evidence="1"/>
<dbReference type="EMBL" id="AL123456">
    <property type="protein sequence ID" value="CCP44511.1"/>
    <property type="molecule type" value="Genomic_DNA"/>
</dbReference>
<dbReference type="PIR" id="B70986">
    <property type="entry name" value="B70986"/>
</dbReference>
<dbReference type="RefSeq" id="NP_216261.1">
    <property type="nucleotide sequence ID" value="NC_000962.3"/>
</dbReference>
<dbReference type="RefSeq" id="WP_003898999.1">
    <property type="nucleotide sequence ID" value="NZ_NVQJ01000010.1"/>
</dbReference>
<dbReference type="SMR" id="P9WKK5"/>
<dbReference type="FunCoup" id="P9WKK5">
    <property type="interactions" value="377"/>
</dbReference>
<dbReference type="STRING" id="83332.Rv1745c"/>
<dbReference type="PaxDb" id="83332-Rv1745c"/>
<dbReference type="DNASU" id="885309"/>
<dbReference type="GeneID" id="45425718"/>
<dbReference type="GeneID" id="885309"/>
<dbReference type="KEGG" id="mtu:Rv1745c"/>
<dbReference type="KEGG" id="mtv:RVBD_1745c"/>
<dbReference type="TubercuList" id="Rv1745c"/>
<dbReference type="eggNOG" id="COG1443">
    <property type="taxonomic scope" value="Bacteria"/>
</dbReference>
<dbReference type="InParanoid" id="P9WKK5"/>
<dbReference type="OrthoDB" id="9809458at2"/>
<dbReference type="PhylomeDB" id="P9WKK5"/>
<dbReference type="UniPathway" id="UPA00059">
    <property type="reaction ID" value="UER00104"/>
</dbReference>
<dbReference type="Proteomes" id="UP000001584">
    <property type="component" value="Chromosome"/>
</dbReference>
<dbReference type="GO" id="GO:0005737">
    <property type="term" value="C:cytoplasm"/>
    <property type="evidence" value="ECO:0007669"/>
    <property type="project" value="UniProtKB-SubCell"/>
</dbReference>
<dbReference type="GO" id="GO:0004452">
    <property type="term" value="F:isopentenyl-diphosphate delta-isomerase activity"/>
    <property type="evidence" value="ECO:0007669"/>
    <property type="project" value="UniProtKB-UniRule"/>
</dbReference>
<dbReference type="GO" id="GO:0046872">
    <property type="term" value="F:metal ion binding"/>
    <property type="evidence" value="ECO:0007669"/>
    <property type="project" value="UniProtKB-KW"/>
</dbReference>
<dbReference type="GO" id="GO:0050992">
    <property type="term" value="P:dimethylallyl diphosphate biosynthetic process"/>
    <property type="evidence" value="ECO:0007669"/>
    <property type="project" value="UniProtKB-UniRule"/>
</dbReference>
<dbReference type="GO" id="GO:0008299">
    <property type="term" value="P:isoprenoid biosynthetic process"/>
    <property type="evidence" value="ECO:0007669"/>
    <property type="project" value="UniProtKB-KW"/>
</dbReference>
<dbReference type="CDD" id="cd02885">
    <property type="entry name" value="NUDIX_IPP_Isomerase"/>
    <property type="match status" value="1"/>
</dbReference>
<dbReference type="FunFam" id="3.90.79.10:FF:000009">
    <property type="entry name" value="Isopentenyl-diphosphate Delta-isomerase"/>
    <property type="match status" value="1"/>
</dbReference>
<dbReference type="Gene3D" id="3.90.79.10">
    <property type="entry name" value="Nucleoside Triphosphate Pyrophosphohydrolase"/>
    <property type="match status" value="1"/>
</dbReference>
<dbReference type="HAMAP" id="MF_00202">
    <property type="entry name" value="Idi"/>
    <property type="match status" value="1"/>
</dbReference>
<dbReference type="InterPro" id="IPR056375">
    <property type="entry name" value="Idi_bact"/>
</dbReference>
<dbReference type="InterPro" id="IPR011876">
    <property type="entry name" value="IsopentenylPP_isomerase_typ1"/>
</dbReference>
<dbReference type="InterPro" id="IPR015797">
    <property type="entry name" value="NUDIX_hydrolase-like_dom_sf"/>
</dbReference>
<dbReference type="InterPro" id="IPR000086">
    <property type="entry name" value="NUDIX_hydrolase_dom"/>
</dbReference>
<dbReference type="NCBIfam" id="TIGR02150">
    <property type="entry name" value="IPP_isom_1"/>
    <property type="match status" value="1"/>
</dbReference>
<dbReference type="NCBIfam" id="NF002995">
    <property type="entry name" value="PRK03759.1"/>
    <property type="match status" value="1"/>
</dbReference>
<dbReference type="PANTHER" id="PTHR10885">
    <property type="entry name" value="ISOPENTENYL-DIPHOSPHATE DELTA-ISOMERASE"/>
    <property type="match status" value="1"/>
</dbReference>
<dbReference type="PANTHER" id="PTHR10885:SF0">
    <property type="entry name" value="ISOPENTENYL-DIPHOSPHATE DELTA-ISOMERASE"/>
    <property type="match status" value="1"/>
</dbReference>
<dbReference type="Pfam" id="PF00293">
    <property type="entry name" value="NUDIX"/>
    <property type="match status" value="1"/>
</dbReference>
<dbReference type="PIRSF" id="PIRSF018427">
    <property type="entry name" value="Isopntndiph_ism"/>
    <property type="match status" value="1"/>
</dbReference>
<dbReference type="SUPFAM" id="SSF55811">
    <property type="entry name" value="Nudix"/>
    <property type="match status" value="1"/>
</dbReference>
<dbReference type="PROSITE" id="PS51462">
    <property type="entry name" value="NUDIX"/>
    <property type="match status" value="1"/>
</dbReference>
<keyword id="KW-0963">Cytoplasm</keyword>
<keyword id="KW-0413">Isomerase</keyword>
<keyword id="KW-0414">Isoprene biosynthesis</keyword>
<keyword id="KW-0460">Magnesium</keyword>
<keyword id="KW-0464">Manganese</keyword>
<keyword id="KW-0479">Metal-binding</keyword>
<keyword id="KW-1185">Reference proteome</keyword>
<protein>
    <recommendedName>
        <fullName evidence="1">Isopentenyl-diphosphate Delta-isomerase</fullName>
        <shortName evidence="1">IPP isomerase</shortName>
        <ecNumber evidence="1">5.3.3.2</ecNumber>
    </recommendedName>
    <alternativeName>
        <fullName evidence="1">IPP:DMAPP isomerase</fullName>
    </alternativeName>
    <alternativeName>
        <fullName evidence="1">Isopentenyl pyrophosphate isomerase</fullName>
    </alternativeName>
</protein>
<feature type="chain" id="PRO_0000205254" description="Isopentenyl-diphosphate Delta-isomerase">
    <location>
        <begin position="1"/>
        <end position="203"/>
    </location>
</feature>
<feature type="domain" description="Nudix hydrolase">
    <location>
        <begin position="38"/>
        <end position="172"/>
    </location>
</feature>
<feature type="active site" evidence="1">
    <location>
        <position position="75"/>
    </location>
</feature>
<feature type="active site" evidence="1">
    <location>
        <position position="124"/>
    </location>
</feature>
<feature type="binding site" evidence="1">
    <location>
        <position position="33"/>
    </location>
    <ligand>
        <name>Mn(2+)</name>
        <dbReference type="ChEBI" id="CHEBI:29035"/>
    </ligand>
</feature>
<feature type="binding site" evidence="1">
    <location>
        <position position="40"/>
    </location>
    <ligand>
        <name>Mn(2+)</name>
        <dbReference type="ChEBI" id="CHEBI:29035"/>
    </ligand>
</feature>
<feature type="binding site" evidence="1">
    <location>
        <position position="75"/>
    </location>
    <ligand>
        <name>Mg(2+)</name>
        <dbReference type="ChEBI" id="CHEBI:18420"/>
    </ligand>
</feature>
<feature type="binding site" evidence="1">
    <location>
        <position position="77"/>
    </location>
    <ligand>
        <name>Mn(2+)</name>
        <dbReference type="ChEBI" id="CHEBI:29035"/>
    </ligand>
</feature>
<feature type="binding site" evidence="1">
    <location>
        <position position="95"/>
    </location>
    <ligand>
        <name>Mg(2+)</name>
        <dbReference type="ChEBI" id="CHEBI:18420"/>
    </ligand>
</feature>
<feature type="binding site" evidence="1">
    <location>
        <position position="122"/>
    </location>
    <ligand>
        <name>Mn(2+)</name>
        <dbReference type="ChEBI" id="CHEBI:29035"/>
    </ligand>
</feature>
<feature type="binding site" evidence="1">
    <location>
        <position position="124"/>
    </location>
    <ligand>
        <name>Mn(2+)</name>
        <dbReference type="ChEBI" id="CHEBI:29035"/>
    </ligand>
</feature>
<comment type="function">
    <text evidence="1">Catalyzes the 1,3-allylic rearrangement of the homoallylic substrate isopentenyl (IPP) to its highly electrophilic allylic isomer, dimethylallyl diphosphate (DMAPP).</text>
</comment>
<comment type="catalytic activity">
    <reaction evidence="1">
        <text>isopentenyl diphosphate = dimethylallyl diphosphate</text>
        <dbReference type="Rhea" id="RHEA:23284"/>
        <dbReference type="ChEBI" id="CHEBI:57623"/>
        <dbReference type="ChEBI" id="CHEBI:128769"/>
        <dbReference type="EC" id="5.3.3.2"/>
    </reaction>
</comment>
<comment type="cofactor">
    <cofactor evidence="1">
        <name>Mg(2+)</name>
        <dbReference type="ChEBI" id="CHEBI:18420"/>
    </cofactor>
    <text evidence="1">Binds 1 Mg(2+) ion per subunit. The magnesium ion binds only when substrate is bound.</text>
</comment>
<comment type="cofactor">
    <cofactor evidence="1">
        <name>Mn(2+)</name>
        <dbReference type="ChEBI" id="CHEBI:29035"/>
    </cofactor>
    <text evidence="1">Binds 1 Mn(2+) ion per subunit.</text>
</comment>
<comment type="pathway">
    <text evidence="1">Isoprenoid biosynthesis; dimethylallyl diphosphate biosynthesis; dimethylallyl diphosphate from isopentenyl diphosphate: step 1/1.</text>
</comment>
<comment type="subcellular location">
    <subcellularLocation>
        <location evidence="1">Cytoplasm</location>
    </subcellularLocation>
</comment>
<comment type="similarity">
    <text evidence="1">Belongs to the IPP isomerase type 1 family.</text>
</comment>
<accession>P9WKK5</accession>
<accession>L0T7J8</accession>
<accession>O08150</accession>
<accession>P72002</accession>
<organism>
    <name type="scientific">Mycobacterium tuberculosis (strain ATCC 25618 / H37Rv)</name>
    <dbReference type="NCBI Taxonomy" id="83332"/>
    <lineage>
        <taxon>Bacteria</taxon>
        <taxon>Bacillati</taxon>
        <taxon>Actinomycetota</taxon>
        <taxon>Actinomycetes</taxon>
        <taxon>Mycobacteriales</taxon>
        <taxon>Mycobacteriaceae</taxon>
        <taxon>Mycobacterium</taxon>
        <taxon>Mycobacterium tuberculosis complex</taxon>
    </lineage>
</organism>
<proteinExistence type="evidence at protein level"/>
<reference key="1">
    <citation type="journal article" date="1998" name="Nature">
        <title>Deciphering the biology of Mycobacterium tuberculosis from the complete genome sequence.</title>
        <authorList>
            <person name="Cole S.T."/>
            <person name="Brosch R."/>
            <person name="Parkhill J."/>
            <person name="Garnier T."/>
            <person name="Churcher C.M."/>
            <person name="Harris D.E."/>
            <person name="Gordon S.V."/>
            <person name="Eiglmeier K."/>
            <person name="Gas S."/>
            <person name="Barry C.E. III"/>
            <person name="Tekaia F."/>
            <person name="Badcock K."/>
            <person name="Basham D."/>
            <person name="Brown D."/>
            <person name="Chillingworth T."/>
            <person name="Connor R."/>
            <person name="Davies R.M."/>
            <person name="Devlin K."/>
            <person name="Feltwell T."/>
            <person name="Gentles S."/>
            <person name="Hamlin N."/>
            <person name="Holroyd S."/>
            <person name="Hornsby T."/>
            <person name="Jagels K."/>
            <person name="Krogh A."/>
            <person name="McLean J."/>
            <person name="Moule S."/>
            <person name="Murphy L.D."/>
            <person name="Oliver S."/>
            <person name="Osborne J."/>
            <person name="Quail M.A."/>
            <person name="Rajandream M.A."/>
            <person name="Rogers J."/>
            <person name="Rutter S."/>
            <person name="Seeger K."/>
            <person name="Skelton S."/>
            <person name="Squares S."/>
            <person name="Squares R."/>
            <person name="Sulston J.E."/>
            <person name="Taylor K."/>
            <person name="Whitehead S."/>
            <person name="Barrell B.G."/>
        </authorList>
    </citation>
    <scope>NUCLEOTIDE SEQUENCE [LARGE SCALE GENOMIC DNA]</scope>
    <source>
        <strain>ATCC 25618 / H37Rv</strain>
    </source>
</reference>
<reference key="2">
    <citation type="journal article" date="2011" name="Mol. Cell. Proteomics">
        <title>Proteogenomic analysis of Mycobacterium tuberculosis by high resolution mass spectrometry.</title>
        <authorList>
            <person name="Kelkar D.S."/>
            <person name="Kumar D."/>
            <person name="Kumar P."/>
            <person name="Balakrishnan L."/>
            <person name="Muthusamy B."/>
            <person name="Yadav A.K."/>
            <person name="Shrivastava P."/>
            <person name="Marimuthu A."/>
            <person name="Anand S."/>
            <person name="Sundaram H."/>
            <person name="Kingsbury R."/>
            <person name="Harsha H.C."/>
            <person name="Nair B."/>
            <person name="Prasad T.S."/>
            <person name="Chauhan D.S."/>
            <person name="Katoch K."/>
            <person name="Katoch V.M."/>
            <person name="Kumar P."/>
            <person name="Chaerkady R."/>
            <person name="Ramachandran S."/>
            <person name="Dash D."/>
            <person name="Pandey A."/>
        </authorList>
    </citation>
    <scope>IDENTIFICATION BY MASS SPECTROMETRY [LARGE SCALE ANALYSIS]</scope>
    <source>
        <strain>ATCC 25618 / H37Rv</strain>
    </source>
</reference>
<sequence>MTRSYRPAPPIERVVLLNDRGDATGVADKATVHTGDTPLHLAFSSYVFDLHDQLLITRRAATKRTWPAVWTNSCCGHPLPGESLPGAIRRRLAAELGLTPDRVDLILPGFRYRAAMADGTVENEICPVYRVQVDQQPRPNSDEVDAIRWLSWEQFVRDVTAGVIAPVSPWCRSQLGYLTKLGPCPAQWPVADDCRLPKAAHGN</sequence>
<name>IDI_MYCTU</name>
<gene>
    <name evidence="1" type="primary">idi</name>
    <name type="ordered locus">Rv1745c</name>
    <name type="ORF">MTCY04C12.29c</name>
    <name type="ORF">MTCY28.08c</name>
</gene>
<evidence type="ECO:0000255" key="1">
    <source>
        <dbReference type="HAMAP-Rule" id="MF_00202"/>
    </source>
</evidence>